<dbReference type="EC" id="1.6.5.2" evidence="1"/>
<dbReference type="EMBL" id="AM286415">
    <property type="protein sequence ID" value="CAL12020.1"/>
    <property type="molecule type" value="Genomic_DNA"/>
</dbReference>
<dbReference type="RefSeq" id="WP_011816244.1">
    <property type="nucleotide sequence ID" value="NC_008800.1"/>
</dbReference>
<dbReference type="RefSeq" id="YP_001006196.1">
    <property type="nucleotide sequence ID" value="NC_008800.1"/>
</dbReference>
<dbReference type="SMR" id="A1JMU2"/>
<dbReference type="KEGG" id="yen:YE1941"/>
<dbReference type="PATRIC" id="fig|393305.7.peg.2098"/>
<dbReference type="eggNOG" id="COG0655">
    <property type="taxonomic scope" value="Bacteria"/>
</dbReference>
<dbReference type="HOGENOM" id="CLU_051402_0_2_6"/>
<dbReference type="OrthoDB" id="9801479at2"/>
<dbReference type="Proteomes" id="UP000000642">
    <property type="component" value="Chromosome"/>
</dbReference>
<dbReference type="GO" id="GO:0016020">
    <property type="term" value="C:membrane"/>
    <property type="evidence" value="ECO:0007669"/>
    <property type="project" value="TreeGrafter"/>
</dbReference>
<dbReference type="GO" id="GO:0050660">
    <property type="term" value="F:flavin adenine dinucleotide binding"/>
    <property type="evidence" value="ECO:0007669"/>
    <property type="project" value="UniProtKB-UniRule"/>
</dbReference>
<dbReference type="GO" id="GO:0010181">
    <property type="term" value="F:FMN binding"/>
    <property type="evidence" value="ECO:0007669"/>
    <property type="project" value="InterPro"/>
</dbReference>
<dbReference type="GO" id="GO:0051287">
    <property type="term" value="F:NAD binding"/>
    <property type="evidence" value="ECO:0007669"/>
    <property type="project" value="UniProtKB-UniRule"/>
</dbReference>
<dbReference type="GO" id="GO:0050136">
    <property type="term" value="F:NADH:ubiquinone reductase (non-electrogenic) activity"/>
    <property type="evidence" value="ECO:0007669"/>
    <property type="project" value="RHEA"/>
</dbReference>
<dbReference type="GO" id="GO:0050661">
    <property type="term" value="F:NADP binding"/>
    <property type="evidence" value="ECO:0007669"/>
    <property type="project" value="UniProtKB-UniRule"/>
</dbReference>
<dbReference type="GO" id="GO:0008753">
    <property type="term" value="F:NADPH dehydrogenase (quinone) activity"/>
    <property type="evidence" value="ECO:0007669"/>
    <property type="project" value="RHEA"/>
</dbReference>
<dbReference type="FunFam" id="3.40.50.360:FF:000004">
    <property type="entry name" value="NAD(P)H dehydrogenase (quinone)"/>
    <property type="match status" value="1"/>
</dbReference>
<dbReference type="Gene3D" id="3.40.50.360">
    <property type="match status" value="1"/>
</dbReference>
<dbReference type="HAMAP" id="MF_01017">
    <property type="entry name" value="NQOR"/>
    <property type="match status" value="1"/>
</dbReference>
<dbReference type="InterPro" id="IPR008254">
    <property type="entry name" value="Flavodoxin/NO_synth"/>
</dbReference>
<dbReference type="InterPro" id="IPR029039">
    <property type="entry name" value="Flavoprotein-like_sf"/>
</dbReference>
<dbReference type="InterPro" id="IPR010089">
    <property type="entry name" value="Flavoprotein_WrbA-like"/>
</dbReference>
<dbReference type="InterPro" id="IPR005025">
    <property type="entry name" value="FMN_Rdtase-like_dom"/>
</dbReference>
<dbReference type="InterPro" id="IPR037513">
    <property type="entry name" value="NQO"/>
</dbReference>
<dbReference type="NCBIfam" id="TIGR01755">
    <property type="entry name" value="flav_wrbA"/>
    <property type="match status" value="1"/>
</dbReference>
<dbReference type="NCBIfam" id="NF002999">
    <property type="entry name" value="PRK03767.1"/>
    <property type="match status" value="1"/>
</dbReference>
<dbReference type="PANTHER" id="PTHR30546">
    <property type="entry name" value="FLAVODOXIN-RELATED PROTEIN WRBA-RELATED"/>
    <property type="match status" value="1"/>
</dbReference>
<dbReference type="PANTHER" id="PTHR30546:SF23">
    <property type="entry name" value="FLAVOPROTEIN-LIKE PROTEIN YCP4-RELATED"/>
    <property type="match status" value="1"/>
</dbReference>
<dbReference type="Pfam" id="PF03358">
    <property type="entry name" value="FMN_red"/>
    <property type="match status" value="1"/>
</dbReference>
<dbReference type="SUPFAM" id="SSF52218">
    <property type="entry name" value="Flavoproteins"/>
    <property type="match status" value="1"/>
</dbReference>
<dbReference type="PROSITE" id="PS50902">
    <property type="entry name" value="FLAVODOXIN_LIKE"/>
    <property type="match status" value="1"/>
</dbReference>
<name>NQOR_YERE8</name>
<organism>
    <name type="scientific">Yersinia enterocolitica serotype O:8 / biotype 1B (strain NCTC 13174 / 8081)</name>
    <dbReference type="NCBI Taxonomy" id="393305"/>
    <lineage>
        <taxon>Bacteria</taxon>
        <taxon>Pseudomonadati</taxon>
        <taxon>Pseudomonadota</taxon>
        <taxon>Gammaproteobacteria</taxon>
        <taxon>Enterobacterales</taxon>
        <taxon>Yersiniaceae</taxon>
        <taxon>Yersinia</taxon>
    </lineage>
</organism>
<accession>A1JMU2</accession>
<keyword id="KW-0285">Flavoprotein</keyword>
<keyword id="KW-0288">FMN</keyword>
<keyword id="KW-0520">NAD</keyword>
<keyword id="KW-0521">NADP</keyword>
<keyword id="KW-0547">Nucleotide-binding</keyword>
<keyword id="KW-0560">Oxidoreductase</keyword>
<protein>
    <recommendedName>
        <fullName evidence="1">NAD(P)H dehydrogenase (quinone)</fullName>
        <ecNumber evidence="1">1.6.5.2</ecNumber>
    </recommendedName>
    <alternativeName>
        <fullName>Flavoprotein WrbA</fullName>
    </alternativeName>
    <alternativeName>
        <fullName evidence="1">NAD(P)H:quinone oxidoreductase</fullName>
        <shortName evidence="1">NQO</shortName>
    </alternativeName>
</protein>
<gene>
    <name type="ordered locus">YE1941</name>
</gene>
<comment type="catalytic activity">
    <reaction evidence="1">
        <text>a quinone + NADH + H(+) = a quinol + NAD(+)</text>
        <dbReference type="Rhea" id="RHEA:46160"/>
        <dbReference type="ChEBI" id="CHEBI:15378"/>
        <dbReference type="ChEBI" id="CHEBI:24646"/>
        <dbReference type="ChEBI" id="CHEBI:57540"/>
        <dbReference type="ChEBI" id="CHEBI:57945"/>
        <dbReference type="ChEBI" id="CHEBI:132124"/>
        <dbReference type="EC" id="1.6.5.2"/>
    </reaction>
</comment>
<comment type="catalytic activity">
    <reaction evidence="1">
        <text>a quinone + NADPH + H(+) = a quinol + NADP(+)</text>
        <dbReference type="Rhea" id="RHEA:46164"/>
        <dbReference type="ChEBI" id="CHEBI:15378"/>
        <dbReference type="ChEBI" id="CHEBI:24646"/>
        <dbReference type="ChEBI" id="CHEBI:57783"/>
        <dbReference type="ChEBI" id="CHEBI:58349"/>
        <dbReference type="ChEBI" id="CHEBI:132124"/>
        <dbReference type="EC" id="1.6.5.2"/>
    </reaction>
</comment>
<comment type="cofactor">
    <cofactor evidence="1">
        <name>FMN</name>
        <dbReference type="ChEBI" id="CHEBI:58210"/>
    </cofactor>
    <text evidence="1">Binds 1 FMN per monomer.</text>
</comment>
<comment type="similarity">
    <text evidence="1">Belongs to the WrbA family.</text>
</comment>
<proteinExistence type="inferred from homology"/>
<evidence type="ECO:0000255" key="1">
    <source>
        <dbReference type="HAMAP-Rule" id="MF_01017"/>
    </source>
</evidence>
<reference key="1">
    <citation type="journal article" date="2006" name="PLoS Genet.">
        <title>The complete genome sequence and comparative genome analysis of the high pathogenicity Yersinia enterocolitica strain 8081.</title>
        <authorList>
            <person name="Thomson N.R."/>
            <person name="Howard S."/>
            <person name="Wren B.W."/>
            <person name="Holden M.T.G."/>
            <person name="Crossman L."/>
            <person name="Challis G.L."/>
            <person name="Churcher C."/>
            <person name="Mungall K."/>
            <person name="Brooks K."/>
            <person name="Chillingworth T."/>
            <person name="Feltwell T."/>
            <person name="Abdellah Z."/>
            <person name="Hauser H."/>
            <person name="Jagels K."/>
            <person name="Maddison M."/>
            <person name="Moule S."/>
            <person name="Sanders M."/>
            <person name="Whitehead S."/>
            <person name="Quail M.A."/>
            <person name="Dougan G."/>
            <person name="Parkhill J."/>
            <person name="Prentice M.B."/>
        </authorList>
    </citation>
    <scope>NUCLEOTIDE SEQUENCE [LARGE SCALE GENOMIC DNA]</scope>
    <source>
        <strain>NCTC 13174 / 8081</strain>
    </source>
</reference>
<sequence>MAKILVLYYSMYGHIETLASAIAEGAQKVDGVEVTIKRVPETMPADAFAKAGGKTDQKAPVATPQELADYHGIIFGTPTRFGNMAGQMRTFLDQTGGLWASGALYGKVASVFASTGTGGGQEHTITSTWTTLAHHGFIIVPIGYGATELFDVSQTRGGTPYGATTIAGGDGSRQPSAEELAIARFQGEHVAKITAKLAR</sequence>
<feature type="chain" id="PRO_0000291036" description="NAD(P)H dehydrogenase (quinone)">
    <location>
        <begin position="1"/>
        <end position="199"/>
    </location>
</feature>
<feature type="domain" description="Flavodoxin-like" evidence="1">
    <location>
        <begin position="4"/>
        <end position="190"/>
    </location>
</feature>
<feature type="binding site" evidence="1">
    <location>
        <begin position="10"/>
        <end position="15"/>
    </location>
    <ligand>
        <name>FMN</name>
        <dbReference type="ChEBI" id="CHEBI:58210"/>
    </ligand>
</feature>
<feature type="binding site" evidence="1">
    <location>
        <position position="12"/>
    </location>
    <ligand>
        <name>NAD(+)</name>
        <dbReference type="ChEBI" id="CHEBI:57540"/>
    </ligand>
</feature>
<feature type="binding site" evidence="1">
    <location>
        <begin position="79"/>
        <end position="81"/>
    </location>
    <ligand>
        <name>FMN</name>
        <dbReference type="ChEBI" id="CHEBI:58210"/>
    </ligand>
</feature>
<feature type="binding site" evidence="1">
    <location>
        <position position="99"/>
    </location>
    <ligand>
        <name>substrate</name>
    </ligand>
</feature>
<feature type="binding site" evidence="1">
    <location>
        <begin position="114"/>
        <end position="119"/>
    </location>
    <ligand>
        <name>FMN</name>
        <dbReference type="ChEBI" id="CHEBI:58210"/>
    </ligand>
</feature>
<feature type="binding site" evidence="1">
    <location>
        <position position="134"/>
    </location>
    <ligand>
        <name>FMN</name>
        <dbReference type="ChEBI" id="CHEBI:58210"/>
    </ligand>
</feature>